<protein>
    <recommendedName>
        <fullName evidence="1">Large ribosomal subunit protein bL33</fullName>
    </recommendedName>
    <alternativeName>
        <fullName evidence="2">50S ribosomal protein L33</fullName>
    </alternativeName>
</protein>
<comment type="similarity">
    <text evidence="1">Belongs to the bacterial ribosomal protein bL33 family.</text>
</comment>
<accession>A8A698</accession>
<gene>
    <name evidence="1" type="primary">rpmG</name>
    <name type="ordered locus">EcHS_A3845</name>
</gene>
<dbReference type="EMBL" id="CP000802">
    <property type="protein sequence ID" value="ABV08052.1"/>
    <property type="molecule type" value="Genomic_DNA"/>
</dbReference>
<dbReference type="RefSeq" id="WP_001051798.1">
    <property type="nucleotide sequence ID" value="NC_009800.1"/>
</dbReference>
<dbReference type="SMR" id="A8A698"/>
<dbReference type="GeneID" id="97607673"/>
<dbReference type="KEGG" id="ecx:EcHS_A3845"/>
<dbReference type="HOGENOM" id="CLU_190949_1_1_6"/>
<dbReference type="GO" id="GO:0022625">
    <property type="term" value="C:cytosolic large ribosomal subunit"/>
    <property type="evidence" value="ECO:0007669"/>
    <property type="project" value="TreeGrafter"/>
</dbReference>
<dbReference type="GO" id="GO:0003735">
    <property type="term" value="F:structural constituent of ribosome"/>
    <property type="evidence" value="ECO:0007669"/>
    <property type="project" value="InterPro"/>
</dbReference>
<dbReference type="GO" id="GO:0006412">
    <property type="term" value="P:translation"/>
    <property type="evidence" value="ECO:0007669"/>
    <property type="project" value="UniProtKB-UniRule"/>
</dbReference>
<dbReference type="FunFam" id="2.20.28.120:FF:000001">
    <property type="entry name" value="50S ribosomal protein L33"/>
    <property type="match status" value="1"/>
</dbReference>
<dbReference type="Gene3D" id="2.20.28.120">
    <property type="entry name" value="Ribosomal protein L33"/>
    <property type="match status" value="1"/>
</dbReference>
<dbReference type="HAMAP" id="MF_00294">
    <property type="entry name" value="Ribosomal_bL33"/>
    <property type="match status" value="1"/>
</dbReference>
<dbReference type="InterPro" id="IPR001705">
    <property type="entry name" value="Ribosomal_bL33"/>
</dbReference>
<dbReference type="InterPro" id="IPR018264">
    <property type="entry name" value="Ribosomal_bL33_CS"/>
</dbReference>
<dbReference type="InterPro" id="IPR038584">
    <property type="entry name" value="Ribosomal_bL33_sf"/>
</dbReference>
<dbReference type="InterPro" id="IPR011332">
    <property type="entry name" value="Ribosomal_zn-bd"/>
</dbReference>
<dbReference type="NCBIfam" id="NF001860">
    <property type="entry name" value="PRK00595.1"/>
    <property type="match status" value="1"/>
</dbReference>
<dbReference type="NCBIfam" id="TIGR01023">
    <property type="entry name" value="rpmG_bact"/>
    <property type="match status" value="1"/>
</dbReference>
<dbReference type="PANTHER" id="PTHR15238">
    <property type="entry name" value="54S RIBOSOMAL PROTEIN L39, MITOCHONDRIAL"/>
    <property type="match status" value="1"/>
</dbReference>
<dbReference type="PANTHER" id="PTHR15238:SF1">
    <property type="entry name" value="LARGE RIBOSOMAL SUBUNIT PROTEIN BL33M"/>
    <property type="match status" value="1"/>
</dbReference>
<dbReference type="Pfam" id="PF00471">
    <property type="entry name" value="Ribosomal_L33"/>
    <property type="match status" value="1"/>
</dbReference>
<dbReference type="SUPFAM" id="SSF57829">
    <property type="entry name" value="Zn-binding ribosomal proteins"/>
    <property type="match status" value="1"/>
</dbReference>
<dbReference type="PROSITE" id="PS00582">
    <property type="entry name" value="RIBOSOMAL_L33"/>
    <property type="match status" value="1"/>
</dbReference>
<reference key="1">
    <citation type="journal article" date="2008" name="J. Bacteriol.">
        <title>The pangenome structure of Escherichia coli: comparative genomic analysis of E. coli commensal and pathogenic isolates.</title>
        <authorList>
            <person name="Rasko D.A."/>
            <person name="Rosovitz M.J."/>
            <person name="Myers G.S.A."/>
            <person name="Mongodin E.F."/>
            <person name="Fricke W.F."/>
            <person name="Gajer P."/>
            <person name="Crabtree J."/>
            <person name="Sebaihia M."/>
            <person name="Thomson N.R."/>
            <person name="Chaudhuri R."/>
            <person name="Henderson I.R."/>
            <person name="Sperandio V."/>
            <person name="Ravel J."/>
        </authorList>
    </citation>
    <scope>NUCLEOTIDE SEQUENCE [LARGE SCALE GENOMIC DNA]</scope>
    <source>
        <strain>HS</strain>
    </source>
</reference>
<name>RL33_ECOHS</name>
<keyword id="KW-0687">Ribonucleoprotein</keyword>
<keyword id="KW-0689">Ribosomal protein</keyword>
<evidence type="ECO:0000255" key="1">
    <source>
        <dbReference type="HAMAP-Rule" id="MF_00294"/>
    </source>
</evidence>
<evidence type="ECO:0000305" key="2"/>
<sequence>MAKGIREKIKLVSSAGTGHFYTTTKNKRTKPEKLELKKFDPVVRQHVIYKEAKIK</sequence>
<organism>
    <name type="scientific">Escherichia coli O9:H4 (strain HS)</name>
    <dbReference type="NCBI Taxonomy" id="331112"/>
    <lineage>
        <taxon>Bacteria</taxon>
        <taxon>Pseudomonadati</taxon>
        <taxon>Pseudomonadota</taxon>
        <taxon>Gammaproteobacteria</taxon>
        <taxon>Enterobacterales</taxon>
        <taxon>Enterobacteriaceae</taxon>
        <taxon>Escherichia</taxon>
    </lineage>
</organism>
<feature type="chain" id="PRO_1000059275" description="Large ribosomal subunit protein bL33">
    <location>
        <begin position="1"/>
        <end position="55"/>
    </location>
</feature>
<proteinExistence type="inferred from homology"/>